<feature type="chain" id="PRO_0000422031" description="(S)-2-hydroxypropylphosphonic acid epoxidase">
    <location>
        <begin position="1"/>
        <end position="190"/>
    </location>
</feature>
<feature type="domain" description="HTH cro/C1-type">
    <location>
        <begin position="10"/>
        <end position="60"/>
    </location>
</feature>
<feature type="domain" description="Cupin type-2" evidence="3">
    <location>
        <begin position="128"/>
        <end position="176"/>
    </location>
</feature>
<feature type="DNA-binding region" description="H-T-H motif" evidence="1">
    <location>
        <begin position="20"/>
        <end position="40"/>
    </location>
</feature>
<feature type="binding site" evidence="2">
    <location>
        <position position="87"/>
    </location>
    <ligand>
        <name>substrate</name>
    </ligand>
</feature>
<feature type="binding site" evidence="2">
    <location>
        <position position="95"/>
    </location>
    <ligand>
        <name>substrate</name>
    </ligand>
</feature>
<feature type="binding site" evidence="2">
    <location>
        <begin position="125"/>
        <end position="128"/>
    </location>
    <ligand>
        <name>substrate</name>
    </ligand>
</feature>
<feature type="binding site" evidence="2">
    <location>
        <position position="128"/>
    </location>
    <ligand>
        <name>Fe cation</name>
        <dbReference type="ChEBI" id="CHEBI:24875"/>
    </ligand>
</feature>
<feature type="binding site" evidence="2">
    <location>
        <position position="132"/>
    </location>
    <ligand>
        <name>Fe cation</name>
        <dbReference type="ChEBI" id="CHEBI:24875"/>
    </ligand>
</feature>
<feature type="binding site" evidence="2">
    <location>
        <position position="132"/>
    </location>
    <ligand>
        <name>substrate</name>
    </ligand>
</feature>
<feature type="binding site" evidence="2">
    <location>
        <position position="171"/>
    </location>
    <ligand>
        <name>Fe cation</name>
        <dbReference type="ChEBI" id="CHEBI:24875"/>
    </ligand>
</feature>
<feature type="strand" evidence="7">
    <location>
        <begin position="6"/>
        <end position="9"/>
    </location>
</feature>
<feature type="helix" evidence="7">
    <location>
        <begin position="10"/>
        <end position="19"/>
    </location>
</feature>
<feature type="helix" evidence="7">
    <location>
        <begin position="24"/>
        <end position="26"/>
    </location>
</feature>
<feature type="strand" evidence="8">
    <location>
        <begin position="27"/>
        <end position="29"/>
    </location>
</feature>
<feature type="strand" evidence="7">
    <location>
        <begin position="34"/>
        <end position="41"/>
    </location>
</feature>
<feature type="helix" evidence="7">
    <location>
        <begin position="42"/>
        <end position="52"/>
    </location>
</feature>
<feature type="helix" evidence="7">
    <location>
        <begin position="56"/>
        <end position="59"/>
    </location>
</feature>
<feature type="turn" evidence="7">
    <location>
        <begin position="60"/>
        <end position="62"/>
    </location>
</feature>
<feature type="strand" evidence="7">
    <location>
        <begin position="72"/>
        <end position="75"/>
    </location>
</feature>
<feature type="strand" evidence="7">
    <location>
        <begin position="82"/>
        <end position="89"/>
    </location>
</feature>
<feature type="strand" evidence="7">
    <location>
        <begin position="91"/>
        <end position="97"/>
    </location>
</feature>
<feature type="strand" evidence="7">
    <location>
        <begin position="108"/>
        <end position="114"/>
    </location>
</feature>
<feature type="strand" evidence="7">
    <location>
        <begin position="129"/>
        <end position="146"/>
    </location>
</feature>
<feature type="helix" evidence="7">
    <location>
        <begin position="148"/>
        <end position="150"/>
    </location>
</feature>
<feature type="strand" evidence="7">
    <location>
        <begin position="152"/>
        <end position="158"/>
    </location>
</feature>
<feature type="strand" evidence="7">
    <location>
        <begin position="162"/>
        <end position="165"/>
    </location>
</feature>
<feature type="strand" evidence="7">
    <location>
        <begin position="171"/>
        <end position="179"/>
    </location>
</feature>
<feature type="strand" evidence="7">
    <location>
        <begin position="183"/>
        <end position="189"/>
    </location>
</feature>
<reference key="1">
    <citation type="journal article" date="1999" name="Biosci. Biotechnol. Biochem.">
        <title>Cloning and expression in Escherichia coli of 2-hydroxypropylphosphonic acid epoxidase from the fosfomycin-producing organism, Pseudomonas syringae PB-5123.</title>
        <authorList>
            <person name="Kuzuyama T."/>
            <person name="Seki T."/>
            <person name="Kobayashi S."/>
            <person name="Hidaka T."/>
            <person name="Seto H."/>
        </authorList>
    </citation>
    <scope>NUCLEOTIDE SEQUENCE [GENOMIC DNA]</scope>
</reference>
<reference key="2">
    <citation type="journal article" date="2012" name="Antimicrob. Agents Chemother.">
        <title>Different biosynthetic pathways to fosfomycin in Pseudomonas syringae and Streptomyces species.</title>
        <authorList>
            <person name="Kim S.Y."/>
            <person name="Ju K.S."/>
            <person name="Metcalf W.W."/>
            <person name="Evans B.S."/>
            <person name="Kuzuyama T."/>
            <person name="van der Donk W.A."/>
        </authorList>
    </citation>
    <scope>NUCLEOTIDE SEQUENCE [GENOMIC DNA]</scope>
    <source>
        <strain>PB-5123</strain>
    </source>
</reference>
<reference key="3">
    <citation type="journal article" date="2008" name="Biochemistry">
        <title>Purification and characterization of the epoxidase catalyzing the formation of fosfomycin from Pseudomonas syringae.</title>
        <authorList>
            <person name="Munos J.W."/>
            <person name="Moon S.J."/>
            <person name="Mansoorabadi S.O."/>
            <person name="Chang W."/>
            <person name="Hong L."/>
            <person name="Yan F."/>
            <person name="Liu A."/>
            <person name="Liu H.W."/>
        </authorList>
    </citation>
    <scope>FUNCTION</scope>
    <scope>CATALYTIC ACTIVITY</scope>
    <scope>COFACTOR</scope>
    <scope>SUBUNIT</scope>
    <scope>PATHWAY</scope>
</reference>
<gene>
    <name type="primary">hppE</name>
</gene>
<accession>Q9JN69</accession>
<dbReference type="EC" id="1.11.1.23" evidence="4"/>
<dbReference type="EMBL" id="D82818">
    <property type="protein sequence ID" value="BAA94418.1"/>
    <property type="molecule type" value="Genomic_DNA"/>
</dbReference>
<dbReference type="EMBL" id="JX102649">
    <property type="protein sequence ID" value="AFM38989.1"/>
    <property type="molecule type" value="Genomic_DNA"/>
</dbReference>
<dbReference type="PDB" id="5U55">
    <property type="method" value="X-ray"/>
    <property type="resolution" value="2.45 A"/>
    <property type="chains" value="A/B/C/D=1-190"/>
</dbReference>
<dbReference type="PDB" id="5U57">
    <property type="method" value="X-ray"/>
    <property type="resolution" value="2.73 A"/>
    <property type="chains" value="A/B/C/D=1-190"/>
</dbReference>
<dbReference type="PDB" id="5U58">
    <property type="method" value="X-ray"/>
    <property type="resolution" value="2.70 A"/>
    <property type="chains" value="A/B/C/D=1-190"/>
</dbReference>
<dbReference type="PDB" id="5U5D">
    <property type="method" value="X-ray"/>
    <property type="resolution" value="2.49 A"/>
    <property type="chains" value="A/B/C/D=1-190"/>
</dbReference>
<dbReference type="PDBsum" id="5U55"/>
<dbReference type="PDBsum" id="5U57"/>
<dbReference type="PDBsum" id="5U58"/>
<dbReference type="PDBsum" id="5U5D"/>
<dbReference type="SMR" id="Q9JN69"/>
<dbReference type="KEGG" id="ag:BAA94418"/>
<dbReference type="BRENDA" id="1.11.1.23">
    <property type="organism ID" value="5193"/>
</dbReference>
<dbReference type="UniPathway" id="UPA01071"/>
<dbReference type="GO" id="GO:0051213">
    <property type="term" value="F:dioxygenase activity"/>
    <property type="evidence" value="ECO:0007669"/>
    <property type="project" value="UniProtKB-KW"/>
</dbReference>
<dbReference type="GO" id="GO:0003677">
    <property type="term" value="F:DNA binding"/>
    <property type="evidence" value="ECO:0007669"/>
    <property type="project" value="UniProtKB-KW"/>
</dbReference>
<dbReference type="GO" id="GO:0046872">
    <property type="term" value="F:metal ion binding"/>
    <property type="evidence" value="ECO:0007669"/>
    <property type="project" value="UniProtKB-KW"/>
</dbReference>
<dbReference type="GO" id="GO:0017000">
    <property type="term" value="P:antibiotic biosynthetic process"/>
    <property type="evidence" value="ECO:0007669"/>
    <property type="project" value="UniProtKB-KW"/>
</dbReference>
<dbReference type="CDD" id="cd20489">
    <property type="entry name" value="cupin_HppE-like_C"/>
    <property type="match status" value="1"/>
</dbReference>
<dbReference type="Gene3D" id="2.60.120.10">
    <property type="entry name" value="Jelly Rolls"/>
    <property type="match status" value="1"/>
</dbReference>
<dbReference type="InterPro" id="IPR013096">
    <property type="entry name" value="Cupin_2"/>
</dbReference>
<dbReference type="InterPro" id="IPR014710">
    <property type="entry name" value="RmlC-like_jellyroll"/>
</dbReference>
<dbReference type="InterPro" id="IPR011051">
    <property type="entry name" value="RmlC_Cupin_sf"/>
</dbReference>
<dbReference type="Pfam" id="PF07883">
    <property type="entry name" value="Cupin_2"/>
    <property type="match status" value="1"/>
</dbReference>
<dbReference type="SUPFAM" id="SSF51182">
    <property type="entry name" value="RmlC-like cupins"/>
    <property type="match status" value="1"/>
</dbReference>
<protein>
    <recommendedName>
        <fullName>(S)-2-hydroxypropylphosphonic acid epoxidase</fullName>
        <ecNumber evidence="4">1.11.1.23</ecNumber>
    </recommendedName>
    <alternativeName>
        <fullName>Hydroxypropylphosphonate epoxidase</fullName>
        <shortName>Ps-hppE</shortName>
    </alternativeName>
</protein>
<keyword id="KW-0002">3D-structure</keyword>
<keyword id="KW-0045">Antibiotic biosynthesis</keyword>
<keyword id="KW-0223">Dioxygenase</keyword>
<keyword id="KW-0238">DNA-binding</keyword>
<keyword id="KW-0408">Iron</keyword>
<keyword id="KW-0479">Metal-binding</keyword>
<keyword id="KW-0520">NAD</keyword>
<keyword id="KW-0560">Oxidoreductase</keyword>
<name>HPPE_PSESX</name>
<sequence>MDVRTLAVGKAHLEALLATRKMTLEHLQDVRHDATQVYFDGLEHLQNVAQYLAIPLSEFFVGQTQSDLDDGVKIARRNGGFKREEIRGGVHYYTYEHLVTTNQDPGLMALRLDLHSDDEQPLRLNGGHGSREIVYVTRGAVRVRWVGDNDELKEDVLNEGDSIFILPNVPHSFTNHVGGAKSEIIAINYG</sequence>
<organism>
    <name type="scientific">Pseudomonas syringae</name>
    <dbReference type="NCBI Taxonomy" id="317"/>
    <lineage>
        <taxon>Bacteria</taxon>
        <taxon>Pseudomonadati</taxon>
        <taxon>Pseudomonadota</taxon>
        <taxon>Gammaproteobacteria</taxon>
        <taxon>Pseudomonadales</taxon>
        <taxon>Pseudomonadaceae</taxon>
        <taxon>Pseudomonas</taxon>
    </lineage>
</organism>
<comment type="function">
    <text evidence="4">Non-heme-dependent dioxygenase that catalyzes the oxidative epoxidation of (S)-2-hydroxypropylphosphonate into (1R,2S)-epoxypropylphosphonate, the final step in the biosynthesis of fosfomycin antibiotic.</text>
</comment>
<comment type="catalytic activity">
    <reaction evidence="4">
        <text>(S)-2-hydroxypropylphosphonate + H2O2 = (1R,2S)-epoxypropylphosphonate + 2 H2O</text>
        <dbReference type="Rhea" id="RHEA:10808"/>
        <dbReference type="ChEBI" id="CHEBI:15377"/>
        <dbReference type="ChEBI" id="CHEBI:16240"/>
        <dbReference type="ChEBI" id="CHEBI:62246"/>
        <dbReference type="ChEBI" id="CHEBI:62247"/>
        <dbReference type="EC" id="1.11.1.23"/>
    </reaction>
</comment>
<comment type="cofactor">
    <cofactor evidence="4">
        <name>Fe(2+)</name>
        <dbReference type="ChEBI" id="CHEBI:29033"/>
    </cofactor>
    <text evidence="4">Binds 1 Fe(2+) ion per subunit.</text>
</comment>
<comment type="pathway">
    <text evidence="6">Antibiotic biosynthesis; fosfomycin biosynthesis.</text>
</comment>
<comment type="subunit">
    <text evidence="6">Homotrimer.</text>
</comment>
<comment type="similarity">
    <text evidence="5">Belongs to the non-heme iron-dependent dioxygenase family.</text>
</comment>
<evidence type="ECO:0000250" key="1"/>
<evidence type="ECO:0000250" key="2">
    <source>
        <dbReference type="UniProtKB" id="Q56185"/>
    </source>
</evidence>
<evidence type="ECO:0000255" key="3"/>
<evidence type="ECO:0000269" key="4">
    <source>
    </source>
</evidence>
<evidence type="ECO:0000305" key="5"/>
<evidence type="ECO:0000305" key="6">
    <source>
    </source>
</evidence>
<evidence type="ECO:0007829" key="7">
    <source>
        <dbReference type="PDB" id="5U55"/>
    </source>
</evidence>
<evidence type="ECO:0007829" key="8">
    <source>
        <dbReference type="PDB" id="5U5D"/>
    </source>
</evidence>
<proteinExistence type="evidence at protein level"/>